<comment type="function">
    <text evidence="1">Catalyzes the reversible cyclization of carbamoyl aspartate to dihydroorotate.</text>
</comment>
<comment type="catalytic activity">
    <reaction evidence="1">
        <text>(S)-dihydroorotate + H2O = N-carbamoyl-L-aspartate + H(+)</text>
        <dbReference type="Rhea" id="RHEA:24296"/>
        <dbReference type="ChEBI" id="CHEBI:15377"/>
        <dbReference type="ChEBI" id="CHEBI:15378"/>
        <dbReference type="ChEBI" id="CHEBI:30864"/>
        <dbReference type="ChEBI" id="CHEBI:32814"/>
        <dbReference type="EC" id="3.5.2.3"/>
    </reaction>
</comment>
<comment type="cofactor">
    <cofactor evidence="1">
        <name>Zn(2+)</name>
        <dbReference type="ChEBI" id="CHEBI:29105"/>
    </cofactor>
    <text evidence="1">Binds 2 Zn(2+) ions per subunit.</text>
</comment>
<comment type="pathway">
    <text evidence="1">Pyrimidine metabolism; UMP biosynthesis via de novo pathway; (S)-dihydroorotate from bicarbonate: step 3/3.</text>
</comment>
<comment type="similarity">
    <text evidence="1">Belongs to the metallo-dependent hydrolases superfamily. DHOase family. Class I DHOase subfamily.</text>
</comment>
<dbReference type="EC" id="3.5.2.3" evidence="1"/>
<dbReference type="EMBL" id="CP001176">
    <property type="protein sequence ID" value="ACK61943.1"/>
    <property type="molecule type" value="Genomic_DNA"/>
</dbReference>
<dbReference type="RefSeq" id="WP_001108363.1">
    <property type="nucleotide sequence ID" value="NC_011725.1"/>
</dbReference>
<dbReference type="SMR" id="B7H6M4"/>
<dbReference type="KEGG" id="bcb:BCB4264_A3986"/>
<dbReference type="HOGENOM" id="CLU_015572_1_0_9"/>
<dbReference type="UniPathway" id="UPA00070">
    <property type="reaction ID" value="UER00117"/>
</dbReference>
<dbReference type="Proteomes" id="UP000007096">
    <property type="component" value="Chromosome"/>
</dbReference>
<dbReference type="GO" id="GO:0005737">
    <property type="term" value="C:cytoplasm"/>
    <property type="evidence" value="ECO:0007669"/>
    <property type="project" value="TreeGrafter"/>
</dbReference>
<dbReference type="GO" id="GO:0004038">
    <property type="term" value="F:allantoinase activity"/>
    <property type="evidence" value="ECO:0007669"/>
    <property type="project" value="TreeGrafter"/>
</dbReference>
<dbReference type="GO" id="GO:0004151">
    <property type="term" value="F:dihydroorotase activity"/>
    <property type="evidence" value="ECO:0007669"/>
    <property type="project" value="UniProtKB-UniRule"/>
</dbReference>
<dbReference type="GO" id="GO:0008270">
    <property type="term" value="F:zinc ion binding"/>
    <property type="evidence" value="ECO:0007669"/>
    <property type="project" value="UniProtKB-UniRule"/>
</dbReference>
<dbReference type="GO" id="GO:0044205">
    <property type="term" value="P:'de novo' UMP biosynthetic process"/>
    <property type="evidence" value="ECO:0007669"/>
    <property type="project" value="UniProtKB-UniRule"/>
</dbReference>
<dbReference type="GO" id="GO:0006145">
    <property type="term" value="P:purine nucleobase catabolic process"/>
    <property type="evidence" value="ECO:0007669"/>
    <property type="project" value="TreeGrafter"/>
</dbReference>
<dbReference type="CDD" id="cd01317">
    <property type="entry name" value="DHOase_IIa"/>
    <property type="match status" value="1"/>
</dbReference>
<dbReference type="FunFam" id="2.30.40.10:FF:000007">
    <property type="entry name" value="Dihydroorotase"/>
    <property type="match status" value="1"/>
</dbReference>
<dbReference type="FunFam" id="3.20.20.140:FF:000025">
    <property type="entry name" value="Dihydroorotase"/>
    <property type="match status" value="1"/>
</dbReference>
<dbReference type="Gene3D" id="3.20.20.140">
    <property type="entry name" value="Metal-dependent hydrolases"/>
    <property type="match status" value="1"/>
</dbReference>
<dbReference type="Gene3D" id="2.30.40.10">
    <property type="entry name" value="Urease, subunit C, domain 1"/>
    <property type="match status" value="2"/>
</dbReference>
<dbReference type="HAMAP" id="MF_00220_B">
    <property type="entry name" value="PyrC_classI_B"/>
    <property type="match status" value="1"/>
</dbReference>
<dbReference type="InterPro" id="IPR006680">
    <property type="entry name" value="Amidohydro-rel"/>
</dbReference>
<dbReference type="InterPro" id="IPR004722">
    <property type="entry name" value="DHOase"/>
</dbReference>
<dbReference type="InterPro" id="IPR050138">
    <property type="entry name" value="DHOase/Allantoinase_Hydrolase"/>
</dbReference>
<dbReference type="InterPro" id="IPR002195">
    <property type="entry name" value="Dihydroorotase_CS"/>
</dbReference>
<dbReference type="InterPro" id="IPR011059">
    <property type="entry name" value="Metal-dep_hydrolase_composite"/>
</dbReference>
<dbReference type="InterPro" id="IPR032466">
    <property type="entry name" value="Metal_Hydrolase"/>
</dbReference>
<dbReference type="NCBIfam" id="NF006837">
    <property type="entry name" value="PRK09357.1-2"/>
    <property type="match status" value="1"/>
</dbReference>
<dbReference type="NCBIfam" id="TIGR00857">
    <property type="entry name" value="pyrC_multi"/>
    <property type="match status" value="1"/>
</dbReference>
<dbReference type="PANTHER" id="PTHR43668">
    <property type="entry name" value="ALLANTOINASE"/>
    <property type="match status" value="1"/>
</dbReference>
<dbReference type="PANTHER" id="PTHR43668:SF2">
    <property type="entry name" value="ALLANTOINASE"/>
    <property type="match status" value="1"/>
</dbReference>
<dbReference type="Pfam" id="PF01979">
    <property type="entry name" value="Amidohydro_1"/>
    <property type="match status" value="1"/>
</dbReference>
<dbReference type="SUPFAM" id="SSF51338">
    <property type="entry name" value="Composite domain of metallo-dependent hydrolases"/>
    <property type="match status" value="1"/>
</dbReference>
<dbReference type="SUPFAM" id="SSF51556">
    <property type="entry name" value="Metallo-dependent hydrolases"/>
    <property type="match status" value="1"/>
</dbReference>
<dbReference type="PROSITE" id="PS00482">
    <property type="entry name" value="DIHYDROOROTASE_1"/>
    <property type="match status" value="1"/>
</dbReference>
<dbReference type="PROSITE" id="PS00483">
    <property type="entry name" value="DIHYDROOROTASE_2"/>
    <property type="match status" value="1"/>
</dbReference>
<organism>
    <name type="scientific">Bacillus cereus (strain B4264)</name>
    <dbReference type="NCBI Taxonomy" id="405532"/>
    <lineage>
        <taxon>Bacteria</taxon>
        <taxon>Bacillati</taxon>
        <taxon>Bacillota</taxon>
        <taxon>Bacilli</taxon>
        <taxon>Bacillales</taxon>
        <taxon>Bacillaceae</taxon>
        <taxon>Bacillus</taxon>
        <taxon>Bacillus cereus group</taxon>
    </lineage>
</organism>
<keyword id="KW-0378">Hydrolase</keyword>
<keyword id="KW-0479">Metal-binding</keyword>
<keyword id="KW-0665">Pyrimidine biosynthesis</keyword>
<keyword id="KW-0862">Zinc</keyword>
<accession>B7H6M4</accession>
<protein>
    <recommendedName>
        <fullName evidence="1">Dihydroorotase</fullName>
        <shortName evidence="1">DHOase</shortName>
        <ecNumber evidence="1">3.5.2.3</ecNumber>
    </recommendedName>
</protein>
<name>PYRC_BACC4</name>
<reference key="1">
    <citation type="submission" date="2008-10" db="EMBL/GenBank/DDBJ databases">
        <title>Genome sequence of Bacillus cereus B4264.</title>
        <authorList>
            <person name="Dodson R.J."/>
            <person name="Durkin A.S."/>
            <person name="Rosovitz M.J."/>
            <person name="Rasko D.A."/>
            <person name="Hoffmaster A."/>
            <person name="Ravel J."/>
            <person name="Sutton G."/>
        </authorList>
    </citation>
    <scope>NUCLEOTIDE SEQUENCE [LARGE SCALE GENOMIC DNA]</scope>
    <source>
        <strain>B4264</strain>
    </source>
</reference>
<evidence type="ECO:0000255" key="1">
    <source>
        <dbReference type="HAMAP-Rule" id="MF_00220"/>
    </source>
</evidence>
<gene>
    <name evidence="1" type="primary">pyrC</name>
    <name type="ordered locus">BCB4264_A3986</name>
</gene>
<sequence length="428" mass="46597">MNYLFKNGRYMNEEGKIVATDLLVQDGKIAKVAENITADNAEVIDVNGKLIAPGLVDVHVHLREPGGEHKETIETGTLAAAKGGFTTICAMPNTRPVPDCREHMEDLQKRIEEKAHVNVLPYGAITVRQAGSEMTDFETLKELGAFAFTDDGVGVQDANMMLAAMKRAAKLDMAVVAHCEENTLINKGCVHEGKFSEKHGLNGIPSVCESVHIARDILLAEAADCHYHVCHVSTKGSVRVIRDAKRAGIKVTAEVTPHHLVLCEDDIPSADPNFKMNPPLRGKEDHAALIEGLLDGTIDMIATDHAPHTAEEKAQGIERAPFGITGFETAFPLLYTNLVKKGVITLEQLIQFLTEKPADTFGLEAGRLKEGRAADITIIDLEQEEEIDPTTFLSKGKNTPFAGWKCQGWPVMTIVGGKIAWQKESALV</sequence>
<proteinExistence type="inferred from homology"/>
<feature type="chain" id="PRO_1000193093" description="Dihydroorotase">
    <location>
        <begin position="1"/>
        <end position="428"/>
    </location>
</feature>
<feature type="active site" evidence="1">
    <location>
        <position position="304"/>
    </location>
</feature>
<feature type="binding site" evidence="1">
    <location>
        <position position="59"/>
    </location>
    <ligand>
        <name>Zn(2+)</name>
        <dbReference type="ChEBI" id="CHEBI:29105"/>
        <label>1</label>
    </ligand>
</feature>
<feature type="binding site" evidence="1">
    <location>
        <begin position="61"/>
        <end position="63"/>
    </location>
    <ligand>
        <name>substrate</name>
    </ligand>
</feature>
<feature type="binding site" evidence="1">
    <location>
        <position position="61"/>
    </location>
    <ligand>
        <name>Zn(2+)</name>
        <dbReference type="ChEBI" id="CHEBI:29105"/>
        <label>1</label>
    </ligand>
</feature>
<feature type="binding site" evidence="1">
    <location>
        <position position="93"/>
    </location>
    <ligand>
        <name>substrate</name>
    </ligand>
</feature>
<feature type="binding site" evidence="1">
    <location>
        <position position="151"/>
    </location>
    <ligand>
        <name>Zn(2+)</name>
        <dbReference type="ChEBI" id="CHEBI:29105"/>
        <label>1</label>
    </ligand>
</feature>
<feature type="binding site" evidence="1">
    <location>
        <position position="151"/>
    </location>
    <ligand>
        <name>Zn(2+)</name>
        <dbReference type="ChEBI" id="CHEBI:29105"/>
        <label>2</label>
    </ligand>
</feature>
<feature type="binding site" evidence="1">
    <location>
        <position position="178"/>
    </location>
    <ligand>
        <name>Zn(2+)</name>
        <dbReference type="ChEBI" id="CHEBI:29105"/>
        <label>2</label>
    </ligand>
</feature>
<feature type="binding site" evidence="1">
    <location>
        <position position="231"/>
    </location>
    <ligand>
        <name>Zn(2+)</name>
        <dbReference type="ChEBI" id="CHEBI:29105"/>
        <label>2</label>
    </ligand>
</feature>
<feature type="binding site" evidence="1">
    <location>
        <position position="277"/>
    </location>
    <ligand>
        <name>substrate</name>
    </ligand>
</feature>
<feature type="binding site" evidence="1">
    <location>
        <position position="304"/>
    </location>
    <ligand>
        <name>Zn(2+)</name>
        <dbReference type="ChEBI" id="CHEBI:29105"/>
        <label>1</label>
    </ligand>
</feature>
<feature type="binding site" evidence="1">
    <location>
        <position position="308"/>
    </location>
    <ligand>
        <name>substrate</name>
    </ligand>
</feature>
<feature type="binding site" evidence="1">
    <location>
        <begin position="322"/>
        <end position="323"/>
    </location>
    <ligand>
        <name>substrate</name>
    </ligand>
</feature>